<dbReference type="EMBL" id="AL646052">
    <property type="protein sequence ID" value="CAD13536.1"/>
    <property type="molecule type" value="Genomic_DNA"/>
</dbReference>
<dbReference type="RefSeq" id="WP_003262970.1">
    <property type="nucleotide sequence ID" value="NC_003295.1"/>
</dbReference>
<dbReference type="SMR" id="Q8Y3H2"/>
<dbReference type="STRING" id="267608.RSc0008"/>
<dbReference type="EnsemblBacteria" id="CAD13536">
    <property type="protein sequence ID" value="CAD13536"/>
    <property type="gene ID" value="RSc0008"/>
</dbReference>
<dbReference type="GeneID" id="97322737"/>
<dbReference type="KEGG" id="rso:RSc0008"/>
<dbReference type="eggNOG" id="COG0828">
    <property type="taxonomic scope" value="Bacteria"/>
</dbReference>
<dbReference type="HOGENOM" id="CLU_159258_1_1_4"/>
<dbReference type="Proteomes" id="UP000001436">
    <property type="component" value="Chromosome"/>
</dbReference>
<dbReference type="GO" id="GO:1990904">
    <property type="term" value="C:ribonucleoprotein complex"/>
    <property type="evidence" value="ECO:0007669"/>
    <property type="project" value="UniProtKB-KW"/>
</dbReference>
<dbReference type="GO" id="GO:0005840">
    <property type="term" value="C:ribosome"/>
    <property type="evidence" value="ECO:0007669"/>
    <property type="project" value="UniProtKB-KW"/>
</dbReference>
<dbReference type="GO" id="GO:0003735">
    <property type="term" value="F:structural constituent of ribosome"/>
    <property type="evidence" value="ECO:0007669"/>
    <property type="project" value="InterPro"/>
</dbReference>
<dbReference type="GO" id="GO:0006412">
    <property type="term" value="P:translation"/>
    <property type="evidence" value="ECO:0007669"/>
    <property type="project" value="UniProtKB-UniRule"/>
</dbReference>
<dbReference type="Gene3D" id="1.20.5.1150">
    <property type="entry name" value="Ribosomal protein S8"/>
    <property type="match status" value="1"/>
</dbReference>
<dbReference type="HAMAP" id="MF_00358">
    <property type="entry name" value="Ribosomal_bS21"/>
    <property type="match status" value="1"/>
</dbReference>
<dbReference type="InterPro" id="IPR001911">
    <property type="entry name" value="Ribosomal_bS21"/>
</dbReference>
<dbReference type="InterPro" id="IPR038380">
    <property type="entry name" value="Ribosomal_bS21_sf"/>
</dbReference>
<dbReference type="NCBIfam" id="TIGR00030">
    <property type="entry name" value="S21p"/>
    <property type="match status" value="1"/>
</dbReference>
<dbReference type="PANTHER" id="PTHR21109">
    <property type="entry name" value="MITOCHONDRIAL 28S RIBOSOMAL PROTEIN S21"/>
    <property type="match status" value="1"/>
</dbReference>
<dbReference type="PANTHER" id="PTHR21109:SF22">
    <property type="entry name" value="SMALL RIBOSOMAL SUBUNIT PROTEIN BS21"/>
    <property type="match status" value="1"/>
</dbReference>
<dbReference type="Pfam" id="PF01165">
    <property type="entry name" value="Ribosomal_S21"/>
    <property type="match status" value="1"/>
</dbReference>
<dbReference type="PRINTS" id="PR00976">
    <property type="entry name" value="RIBOSOMALS21"/>
</dbReference>
<sequence>MTTIRLKENEPVEVALRRFRREIERTGLIKELRARTAYEKPTTERKRKKAAAVSRTRKRLRSQMLPKKLY</sequence>
<organism>
    <name type="scientific">Ralstonia nicotianae (strain ATCC BAA-1114 / GMI1000)</name>
    <name type="common">Ralstonia solanacearum</name>
    <dbReference type="NCBI Taxonomy" id="267608"/>
    <lineage>
        <taxon>Bacteria</taxon>
        <taxon>Pseudomonadati</taxon>
        <taxon>Pseudomonadota</taxon>
        <taxon>Betaproteobacteria</taxon>
        <taxon>Burkholderiales</taxon>
        <taxon>Burkholderiaceae</taxon>
        <taxon>Ralstonia</taxon>
        <taxon>Ralstonia solanacearum species complex</taxon>
    </lineage>
</organism>
<gene>
    <name evidence="1" type="primary">rpsU</name>
    <name type="ordered locus">RSc0008</name>
    <name type="ORF">RS01830</name>
</gene>
<proteinExistence type="inferred from homology"/>
<keyword id="KW-1185">Reference proteome</keyword>
<keyword id="KW-0687">Ribonucleoprotein</keyword>
<keyword id="KW-0689">Ribosomal protein</keyword>
<accession>Q8Y3H2</accession>
<evidence type="ECO:0000255" key="1">
    <source>
        <dbReference type="HAMAP-Rule" id="MF_00358"/>
    </source>
</evidence>
<evidence type="ECO:0000256" key="2">
    <source>
        <dbReference type="SAM" id="MobiDB-lite"/>
    </source>
</evidence>
<evidence type="ECO:0000305" key="3"/>
<protein>
    <recommendedName>
        <fullName evidence="1">Small ribosomal subunit protein bS21</fullName>
    </recommendedName>
    <alternativeName>
        <fullName evidence="3">30S ribosomal protein S21</fullName>
    </alternativeName>
</protein>
<name>RS21_RALN1</name>
<comment type="similarity">
    <text evidence="1">Belongs to the bacterial ribosomal protein bS21 family.</text>
</comment>
<feature type="chain" id="PRO_0000178363" description="Small ribosomal subunit protein bS21">
    <location>
        <begin position="1"/>
        <end position="70"/>
    </location>
</feature>
<feature type="region of interest" description="Disordered" evidence="2">
    <location>
        <begin position="39"/>
        <end position="70"/>
    </location>
</feature>
<feature type="compositionally biased region" description="Basic residues" evidence="2">
    <location>
        <begin position="45"/>
        <end position="61"/>
    </location>
</feature>
<reference key="1">
    <citation type="journal article" date="2002" name="Nature">
        <title>Genome sequence of the plant pathogen Ralstonia solanacearum.</title>
        <authorList>
            <person name="Salanoubat M."/>
            <person name="Genin S."/>
            <person name="Artiguenave F."/>
            <person name="Gouzy J."/>
            <person name="Mangenot S."/>
            <person name="Arlat M."/>
            <person name="Billault A."/>
            <person name="Brottier P."/>
            <person name="Camus J.-C."/>
            <person name="Cattolico L."/>
            <person name="Chandler M."/>
            <person name="Choisne N."/>
            <person name="Claudel-Renard C."/>
            <person name="Cunnac S."/>
            <person name="Demange N."/>
            <person name="Gaspin C."/>
            <person name="Lavie M."/>
            <person name="Moisan A."/>
            <person name="Robert C."/>
            <person name="Saurin W."/>
            <person name="Schiex T."/>
            <person name="Siguier P."/>
            <person name="Thebault P."/>
            <person name="Whalen M."/>
            <person name="Wincker P."/>
            <person name="Levy M."/>
            <person name="Weissenbach J."/>
            <person name="Boucher C.A."/>
        </authorList>
    </citation>
    <scope>NUCLEOTIDE SEQUENCE [LARGE SCALE GENOMIC DNA]</scope>
    <source>
        <strain>ATCC BAA-1114 / GMI1000</strain>
    </source>
</reference>